<dbReference type="EMBL" id="CP000082">
    <property type="protein sequence ID" value="AAZ18375.1"/>
    <property type="molecule type" value="Genomic_DNA"/>
</dbReference>
<dbReference type="RefSeq" id="WP_010196728.1">
    <property type="nucleotide sequence ID" value="NC_007204.1"/>
</dbReference>
<dbReference type="SMR" id="Q4FUD3"/>
<dbReference type="STRING" id="259536.Psyc_0512"/>
<dbReference type="KEGG" id="par:Psyc_0512"/>
<dbReference type="eggNOG" id="COG0100">
    <property type="taxonomic scope" value="Bacteria"/>
</dbReference>
<dbReference type="HOGENOM" id="CLU_072439_5_0_6"/>
<dbReference type="OrthoDB" id="9806415at2"/>
<dbReference type="Proteomes" id="UP000000546">
    <property type="component" value="Chromosome"/>
</dbReference>
<dbReference type="GO" id="GO:1990904">
    <property type="term" value="C:ribonucleoprotein complex"/>
    <property type="evidence" value="ECO:0007669"/>
    <property type="project" value="UniProtKB-KW"/>
</dbReference>
<dbReference type="GO" id="GO:0005840">
    <property type="term" value="C:ribosome"/>
    <property type="evidence" value="ECO:0007669"/>
    <property type="project" value="UniProtKB-KW"/>
</dbReference>
<dbReference type="GO" id="GO:0019843">
    <property type="term" value="F:rRNA binding"/>
    <property type="evidence" value="ECO:0007669"/>
    <property type="project" value="UniProtKB-UniRule"/>
</dbReference>
<dbReference type="GO" id="GO:0003735">
    <property type="term" value="F:structural constituent of ribosome"/>
    <property type="evidence" value="ECO:0007669"/>
    <property type="project" value="InterPro"/>
</dbReference>
<dbReference type="GO" id="GO:0006412">
    <property type="term" value="P:translation"/>
    <property type="evidence" value="ECO:0007669"/>
    <property type="project" value="UniProtKB-UniRule"/>
</dbReference>
<dbReference type="FunFam" id="3.30.420.80:FF:000001">
    <property type="entry name" value="30S ribosomal protein S11"/>
    <property type="match status" value="1"/>
</dbReference>
<dbReference type="Gene3D" id="3.30.420.80">
    <property type="entry name" value="Ribosomal protein S11"/>
    <property type="match status" value="1"/>
</dbReference>
<dbReference type="HAMAP" id="MF_01310">
    <property type="entry name" value="Ribosomal_uS11"/>
    <property type="match status" value="1"/>
</dbReference>
<dbReference type="InterPro" id="IPR001971">
    <property type="entry name" value="Ribosomal_uS11"/>
</dbReference>
<dbReference type="InterPro" id="IPR019981">
    <property type="entry name" value="Ribosomal_uS11_bac-type"/>
</dbReference>
<dbReference type="InterPro" id="IPR018102">
    <property type="entry name" value="Ribosomal_uS11_CS"/>
</dbReference>
<dbReference type="InterPro" id="IPR036967">
    <property type="entry name" value="Ribosomal_uS11_sf"/>
</dbReference>
<dbReference type="NCBIfam" id="NF003698">
    <property type="entry name" value="PRK05309.1"/>
    <property type="match status" value="1"/>
</dbReference>
<dbReference type="NCBIfam" id="TIGR03632">
    <property type="entry name" value="uS11_bact"/>
    <property type="match status" value="1"/>
</dbReference>
<dbReference type="PANTHER" id="PTHR11759">
    <property type="entry name" value="40S RIBOSOMAL PROTEIN S14/30S RIBOSOMAL PROTEIN S11"/>
    <property type="match status" value="1"/>
</dbReference>
<dbReference type="Pfam" id="PF00411">
    <property type="entry name" value="Ribosomal_S11"/>
    <property type="match status" value="1"/>
</dbReference>
<dbReference type="PIRSF" id="PIRSF002131">
    <property type="entry name" value="Ribosomal_S11"/>
    <property type="match status" value="1"/>
</dbReference>
<dbReference type="SUPFAM" id="SSF53137">
    <property type="entry name" value="Translational machinery components"/>
    <property type="match status" value="1"/>
</dbReference>
<dbReference type="PROSITE" id="PS00054">
    <property type="entry name" value="RIBOSOMAL_S11"/>
    <property type="match status" value="1"/>
</dbReference>
<sequence>MAKDTRSRKKVARRSVSEGIAHIHASFNNTIVTITDRQGNALAWATSGGQGFRGSRKSTPFAAQVAAEVAGKAAQEYGVKNIDVLVKGPGPGRESAVRALGALGYKVNSISDVTPIPHNGCRAPKKRRV</sequence>
<feature type="chain" id="PRO_0000230423" description="Small ribosomal subunit protein uS11">
    <location>
        <begin position="1"/>
        <end position="129"/>
    </location>
</feature>
<gene>
    <name evidence="1" type="primary">rpsK</name>
    <name type="ordered locus">Psyc_0512</name>
</gene>
<reference key="1">
    <citation type="journal article" date="2010" name="Appl. Environ. Microbiol.">
        <title>The genome sequence of Psychrobacter arcticus 273-4, a psychroactive Siberian permafrost bacterium, reveals mechanisms for adaptation to low-temperature growth.</title>
        <authorList>
            <person name="Ayala-del-Rio H.L."/>
            <person name="Chain P.S."/>
            <person name="Grzymski J.J."/>
            <person name="Ponder M.A."/>
            <person name="Ivanova N."/>
            <person name="Bergholz P.W."/>
            <person name="Di Bartolo G."/>
            <person name="Hauser L."/>
            <person name="Land M."/>
            <person name="Bakermans C."/>
            <person name="Rodrigues D."/>
            <person name="Klappenbach J."/>
            <person name="Zarka D."/>
            <person name="Larimer F."/>
            <person name="Richardson P."/>
            <person name="Murray A."/>
            <person name="Thomashow M."/>
            <person name="Tiedje J.M."/>
        </authorList>
    </citation>
    <scope>NUCLEOTIDE SEQUENCE [LARGE SCALE GENOMIC DNA]</scope>
    <source>
        <strain>DSM 17307 / VKM B-2377 / 273-4</strain>
    </source>
</reference>
<name>RS11_PSYA2</name>
<evidence type="ECO:0000255" key="1">
    <source>
        <dbReference type="HAMAP-Rule" id="MF_01310"/>
    </source>
</evidence>
<evidence type="ECO:0000305" key="2"/>
<accession>Q4FUD3</accession>
<organism>
    <name type="scientific">Psychrobacter arcticus (strain DSM 17307 / VKM B-2377 / 273-4)</name>
    <dbReference type="NCBI Taxonomy" id="259536"/>
    <lineage>
        <taxon>Bacteria</taxon>
        <taxon>Pseudomonadati</taxon>
        <taxon>Pseudomonadota</taxon>
        <taxon>Gammaproteobacteria</taxon>
        <taxon>Moraxellales</taxon>
        <taxon>Moraxellaceae</taxon>
        <taxon>Psychrobacter</taxon>
    </lineage>
</organism>
<protein>
    <recommendedName>
        <fullName evidence="1">Small ribosomal subunit protein uS11</fullName>
    </recommendedName>
    <alternativeName>
        <fullName evidence="2">30S ribosomal protein S11</fullName>
    </alternativeName>
</protein>
<proteinExistence type="inferred from homology"/>
<comment type="function">
    <text evidence="1">Located on the platform of the 30S subunit, it bridges several disparate RNA helices of the 16S rRNA. Forms part of the Shine-Dalgarno cleft in the 70S ribosome.</text>
</comment>
<comment type="subunit">
    <text evidence="1">Part of the 30S ribosomal subunit. Interacts with proteins S7 and S18. Binds to IF-3.</text>
</comment>
<comment type="similarity">
    <text evidence="1">Belongs to the universal ribosomal protein uS11 family.</text>
</comment>
<keyword id="KW-1185">Reference proteome</keyword>
<keyword id="KW-0687">Ribonucleoprotein</keyword>
<keyword id="KW-0689">Ribosomal protein</keyword>
<keyword id="KW-0694">RNA-binding</keyword>
<keyword id="KW-0699">rRNA-binding</keyword>